<organism>
    <name type="scientific">Erwinia tasmaniensis (strain DSM 17950 / CFBP 7177 / CIP 109463 / NCPPB 4357 / Et1/99)</name>
    <dbReference type="NCBI Taxonomy" id="465817"/>
    <lineage>
        <taxon>Bacteria</taxon>
        <taxon>Pseudomonadati</taxon>
        <taxon>Pseudomonadota</taxon>
        <taxon>Gammaproteobacteria</taxon>
        <taxon>Enterobacterales</taxon>
        <taxon>Erwiniaceae</taxon>
        <taxon>Erwinia</taxon>
    </lineage>
</organism>
<proteinExistence type="inferred from homology"/>
<reference key="1">
    <citation type="journal article" date="2008" name="Environ. Microbiol.">
        <title>The genome of Erwinia tasmaniensis strain Et1/99, a non-pathogenic bacterium in the genus Erwinia.</title>
        <authorList>
            <person name="Kube M."/>
            <person name="Migdoll A.M."/>
            <person name="Mueller I."/>
            <person name="Kuhl H."/>
            <person name="Beck A."/>
            <person name="Reinhardt R."/>
            <person name="Geider K."/>
        </authorList>
    </citation>
    <scope>NUCLEOTIDE SEQUENCE [LARGE SCALE GENOMIC DNA]</scope>
    <source>
        <strain>DSM 17950 / CFBP 7177 / CIP 109463 / NCPPB 4357 / Et1/99</strain>
    </source>
</reference>
<keyword id="KW-0238">DNA-binding</keyword>
<keyword id="KW-1185">Reference proteome</keyword>
<keyword id="KW-0804">Transcription</keyword>
<keyword id="KW-0805">Transcription regulation</keyword>
<feature type="chain" id="PRO_1000127274" description="HTH-type transcriptional regulator ArgP">
    <location>
        <begin position="1"/>
        <end position="299"/>
    </location>
</feature>
<feature type="domain" description="HTH lysR-type" evidence="1">
    <location>
        <begin position="4"/>
        <end position="60"/>
    </location>
</feature>
<feature type="DNA-binding region" description="H-T-H motif" evidence="1">
    <location>
        <begin position="21"/>
        <end position="40"/>
    </location>
</feature>
<comment type="function">
    <text evidence="1">Controls the transcription of genes involved in arginine and lysine metabolism.</text>
</comment>
<comment type="subunit">
    <text evidence="1">Homodimer.</text>
</comment>
<comment type="similarity">
    <text evidence="2">Belongs to the LysR transcriptional regulatory family.</text>
</comment>
<protein>
    <recommendedName>
        <fullName evidence="1">HTH-type transcriptional regulator ArgP</fullName>
    </recommendedName>
</protein>
<accession>B2VF18</accession>
<evidence type="ECO:0000255" key="1">
    <source>
        <dbReference type="HAMAP-Rule" id="MF_00513"/>
    </source>
</evidence>
<evidence type="ECO:0000305" key="2"/>
<name>ARGP_ERWT9</name>
<sequence length="299" mass="33614">MKRPDYRTLQALDAVIRERGFERAAQKLCITQSAVSQRIKQLENMFGQPLLVRTVPPRPTEQGQKLLALLHQVELLEEEWLGDDNSGTTPLLLSLAVNADSLATWLLPALKTVLTDSPVRLNIQVEDETRTQERLRRGEVVGAVSIQPQPLPSCLVDRLGALDYLFVGSKEFAARYFPNGVTRSALLKAPAVAFDHLDDMHQAFLQQNFDLSPGSVPCHIVNSSEAFVQLARQGTTCCMIPHLQIERELAEGELIDLTPGLLQRRMLYWHRFSPESRLMRKVTDALLAHGHRVLRQDTA</sequence>
<dbReference type="EMBL" id="CU468135">
    <property type="protein sequence ID" value="CAO97855.1"/>
    <property type="molecule type" value="Genomic_DNA"/>
</dbReference>
<dbReference type="RefSeq" id="WP_012442512.1">
    <property type="nucleotide sequence ID" value="NC_010694.1"/>
</dbReference>
<dbReference type="SMR" id="B2VF18"/>
<dbReference type="STRING" id="465817.ETA_28090"/>
<dbReference type="KEGG" id="eta:ETA_28090"/>
<dbReference type="eggNOG" id="COG0583">
    <property type="taxonomic scope" value="Bacteria"/>
</dbReference>
<dbReference type="HOGENOM" id="CLU_063829_0_0_6"/>
<dbReference type="OrthoDB" id="3252676at2"/>
<dbReference type="Proteomes" id="UP000001726">
    <property type="component" value="Chromosome"/>
</dbReference>
<dbReference type="GO" id="GO:0003677">
    <property type="term" value="F:DNA binding"/>
    <property type="evidence" value="ECO:0007669"/>
    <property type="project" value="UniProtKB-UniRule"/>
</dbReference>
<dbReference type="GO" id="GO:0003700">
    <property type="term" value="F:DNA-binding transcription factor activity"/>
    <property type="evidence" value="ECO:0007669"/>
    <property type="project" value="UniProtKB-UniRule"/>
</dbReference>
<dbReference type="CDD" id="cd08428">
    <property type="entry name" value="PBP2_IciA_ArgP"/>
    <property type="match status" value="1"/>
</dbReference>
<dbReference type="FunFam" id="1.10.10.10:FF:000061">
    <property type="entry name" value="HTH-type transcriptional regulator ArgP"/>
    <property type="match status" value="1"/>
</dbReference>
<dbReference type="FunFam" id="3.40.190.290:FF:000002">
    <property type="entry name" value="HTH-type transcriptional regulator ArgP"/>
    <property type="match status" value="1"/>
</dbReference>
<dbReference type="Gene3D" id="3.40.190.290">
    <property type="match status" value="1"/>
</dbReference>
<dbReference type="Gene3D" id="1.10.10.10">
    <property type="entry name" value="Winged helix-like DNA-binding domain superfamily/Winged helix DNA-binding domain"/>
    <property type="match status" value="1"/>
</dbReference>
<dbReference type="HAMAP" id="MF_00513">
    <property type="entry name" value="HTH_type_ArgP"/>
    <property type="match status" value="1"/>
</dbReference>
<dbReference type="InterPro" id="IPR017685">
    <property type="entry name" value="ArgP"/>
</dbReference>
<dbReference type="InterPro" id="IPR023490">
    <property type="entry name" value="ArgP_gammaproteobact"/>
</dbReference>
<dbReference type="InterPro" id="IPR050176">
    <property type="entry name" value="LTTR"/>
</dbReference>
<dbReference type="InterPro" id="IPR005119">
    <property type="entry name" value="LysR_subst-bd"/>
</dbReference>
<dbReference type="InterPro" id="IPR000847">
    <property type="entry name" value="Tscrpt_reg_HTH_LysR"/>
</dbReference>
<dbReference type="InterPro" id="IPR036388">
    <property type="entry name" value="WH-like_DNA-bd_sf"/>
</dbReference>
<dbReference type="InterPro" id="IPR036390">
    <property type="entry name" value="WH_DNA-bd_sf"/>
</dbReference>
<dbReference type="NCBIfam" id="TIGR03298">
    <property type="entry name" value="argP"/>
    <property type="match status" value="1"/>
</dbReference>
<dbReference type="NCBIfam" id="NF002964">
    <property type="entry name" value="PRK03635.1"/>
    <property type="match status" value="1"/>
</dbReference>
<dbReference type="NCBIfam" id="NF009888">
    <property type="entry name" value="PRK13348.1"/>
    <property type="match status" value="1"/>
</dbReference>
<dbReference type="PANTHER" id="PTHR30579:SF2">
    <property type="entry name" value="HTH-TYPE TRANSCRIPTIONAL REGULATOR ARGP"/>
    <property type="match status" value="1"/>
</dbReference>
<dbReference type="PANTHER" id="PTHR30579">
    <property type="entry name" value="TRANSCRIPTIONAL REGULATOR"/>
    <property type="match status" value="1"/>
</dbReference>
<dbReference type="Pfam" id="PF00126">
    <property type="entry name" value="HTH_1"/>
    <property type="match status" value="1"/>
</dbReference>
<dbReference type="Pfam" id="PF03466">
    <property type="entry name" value="LysR_substrate"/>
    <property type="match status" value="1"/>
</dbReference>
<dbReference type="PRINTS" id="PR00039">
    <property type="entry name" value="HTHLYSR"/>
</dbReference>
<dbReference type="SUPFAM" id="SSF53850">
    <property type="entry name" value="Periplasmic binding protein-like II"/>
    <property type="match status" value="1"/>
</dbReference>
<dbReference type="SUPFAM" id="SSF46785">
    <property type="entry name" value="Winged helix' DNA-binding domain"/>
    <property type="match status" value="1"/>
</dbReference>
<dbReference type="PROSITE" id="PS50931">
    <property type="entry name" value="HTH_LYSR"/>
    <property type="match status" value="1"/>
</dbReference>
<gene>
    <name evidence="1" type="primary">argP</name>
    <name type="synonym">iciA</name>
    <name type="ordered locus">ETA_28090</name>
</gene>